<reference key="1">
    <citation type="journal article" date="2006" name="J. Bacteriol.">
        <title>Complete genome sequence of Yersinia pestis strains Antiqua and Nepal516: evidence of gene reduction in an emerging pathogen.</title>
        <authorList>
            <person name="Chain P.S.G."/>
            <person name="Hu P."/>
            <person name="Malfatti S.A."/>
            <person name="Radnedge L."/>
            <person name="Larimer F."/>
            <person name="Vergez L.M."/>
            <person name="Worsham P."/>
            <person name="Chu M.C."/>
            <person name="Andersen G.L."/>
        </authorList>
    </citation>
    <scope>NUCLEOTIDE SEQUENCE [LARGE SCALE GENOMIC DNA]</scope>
    <source>
        <strain>Antiqua</strain>
    </source>
</reference>
<gene>
    <name evidence="1" type="primary">btuF</name>
    <name type="ordered locus">YPA_2884</name>
</gene>
<comment type="function">
    <text evidence="1">Part of the ABC transporter complex BtuCDF involved in vitamin B12 import. Binds vitamin B12 and delivers it to the periplasmic surface of BtuC.</text>
</comment>
<comment type="subunit">
    <text evidence="1">The complex is composed of two ATP-binding proteins (BtuD), two transmembrane proteins (BtuC) and a solute-binding protein (BtuF).</text>
</comment>
<comment type="subcellular location">
    <subcellularLocation>
        <location evidence="1">Periplasm</location>
    </subcellularLocation>
</comment>
<comment type="similarity">
    <text evidence="1">Belongs to the BtuF family.</text>
</comment>
<proteinExistence type="inferred from homology"/>
<evidence type="ECO:0000255" key="1">
    <source>
        <dbReference type="HAMAP-Rule" id="MF_01000"/>
    </source>
</evidence>
<feature type="signal peptide" evidence="1">
    <location>
        <begin position="1"/>
        <end position="27"/>
    </location>
</feature>
<feature type="chain" id="PRO_5000116193" description="Vitamin B12-binding protein">
    <location>
        <begin position="28"/>
        <end position="280"/>
    </location>
</feature>
<feature type="domain" description="Fe/B12 periplasmic-binding" evidence="1">
    <location>
        <begin position="30"/>
        <end position="277"/>
    </location>
</feature>
<feature type="binding site" evidence="1">
    <location>
        <position position="57"/>
    </location>
    <ligand>
        <name>cyanocob(III)alamin</name>
        <dbReference type="ChEBI" id="CHEBI:17439"/>
    </ligand>
</feature>
<feature type="site" description="Important for BtuC binding" evidence="1">
    <location>
        <position position="79"/>
    </location>
</feature>
<feature type="site" description="Important for BtuC binding" evidence="1">
    <location>
        <position position="209"/>
    </location>
</feature>
<feature type="disulfide bond" evidence="1">
    <location>
        <begin position="190"/>
        <end position="266"/>
    </location>
</feature>
<name>BTUF_YERPA</name>
<accession>Q1C3X6</accession>
<sequence length="280" mass="30813">MMPLGLFPLPRAAAVLLISLLTLPAQAAERVISLSPSTTELAYAAGLGDKLVAVSAYSDYPESAKKLEHVASWQGINVERILALKPDLILAWRGGNPQRPLDQLAALGIPIFYSDPTHIDQIASDLDKLAQYSPHPEQAHQAAEQFRQHVNTLRDRYARSQPKRTFLQFGTQPLFTSSGHTLQSEVVSLCGGENIFADSRVPWPQVSREQVMTRKPQVIVVSGTQSQVDNVSAFWLPQLVVPVIALNEDWFNRASPRILLAAQQLCQQMASIPTPVAESH</sequence>
<organism>
    <name type="scientific">Yersinia pestis bv. Antiqua (strain Antiqua)</name>
    <dbReference type="NCBI Taxonomy" id="360102"/>
    <lineage>
        <taxon>Bacteria</taxon>
        <taxon>Pseudomonadati</taxon>
        <taxon>Pseudomonadota</taxon>
        <taxon>Gammaproteobacteria</taxon>
        <taxon>Enterobacterales</taxon>
        <taxon>Yersiniaceae</taxon>
        <taxon>Yersinia</taxon>
    </lineage>
</organism>
<protein>
    <recommendedName>
        <fullName evidence="1">Vitamin B12-binding protein</fullName>
    </recommendedName>
</protein>
<keyword id="KW-1015">Disulfide bond</keyword>
<keyword id="KW-0574">Periplasm</keyword>
<keyword id="KW-0732">Signal</keyword>
<keyword id="KW-0813">Transport</keyword>
<dbReference type="EMBL" id="CP000308">
    <property type="protein sequence ID" value="ABG14846.1"/>
    <property type="molecule type" value="Genomic_DNA"/>
</dbReference>
<dbReference type="RefSeq" id="WP_002222100.1">
    <property type="nucleotide sequence ID" value="NZ_CP009906.1"/>
</dbReference>
<dbReference type="SMR" id="Q1C3X6"/>
<dbReference type="GeneID" id="57975324"/>
<dbReference type="KEGG" id="ypa:YPA_2884"/>
<dbReference type="Proteomes" id="UP000001971">
    <property type="component" value="Chromosome"/>
</dbReference>
<dbReference type="GO" id="GO:0042597">
    <property type="term" value="C:periplasmic space"/>
    <property type="evidence" value="ECO:0007669"/>
    <property type="project" value="UniProtKB-SubCell"/>
</dbReference>
<dbReference type="GO" id="GO:0031419">
    <property type="term" value="F:cobalamin binding"/>
    <property type="evidence" value="ECO:0007669"/>
    <property type="project" value="InterPro"/>
</dbReference>
<dbReference type="GO" id="GO:0015889">
    <property type="term" value="P:cobalamin transport"/>
    <property type="evidence" value="ECO:0007669"/>
    <property type="project" value="UniProtKB-UniRule"/>
</dbReference>
<dbReference type="CDD" id="cd01144">
    <property type="entry name" value="BtuF"/>
    <property type="match status" value="1"/>
</dbReference>
<dbReference type="Gene3D" id="3.40.50.1980">
    <property type="entry name" value="Nitrogenase molybdenum iron protein domain"/>
    <property type="match status" value="2"/>
</dbReference>
<dbReference type="HAMAP" id="MF_01000">
    <property type="entry name" value="BtuF"/>
    <property type="match status" value="1"/>
</dbReference>
<dbReference type="InterPro" id="IPR002491">
    <property type="entry name" value="ABC_transptr_periplasmic_BD"/>
</dbReference>
<dbReference type="InterPro" id="IPR023544">
    <property type="entry name" value="ABC_transptr_vit_B12-bd"/>
</dbReference>
<dbReference type="InterPro" id="IPR054828">
    <property type="entry name" value="Vit_B12_bind_prot"/>
</dbReference>
<dbReference type="InterPro" id="IPR051030">
    <property type="entry name" value="Vitamin_B12-ABC_binding"/>
</dbReference>
<dbReference type="NCBIfam" id="NF002894">
    <property type="entry name" value="PRK03379.1"/>
    <property type="match status" value="1"/>
</dbReference>
<dbReference type="NCBIfam" id="NF038402">
    <property type="entry name" value="TroA_like"/>
    <property type="match status" value="1"/>
</dbReference>
<dbReference type="PANTHER" id="PTHR42860">
    <property type="entry name" value="VITAMIN B12-BINDING PROTEIN"/>
    <property type="match status" value="1"/>
</dbReference>
<dbReference type="PANTHER" id="PTHR42860:SF1">
    <property type="entry name" value="VITAMIN B12-BINDING PROTEIN"/>
    <property type="match status" value="1"/>
</dbReference>
<dbReference type="Pfam" id="PF01497">
    <property type="entry name" value="Peripla_BP_2"/>
    <property type="match status" value="1"/>
</dbReference>
<dbReference type="SUPFAM" id="SSF53807">
    <property type="entry name" value="Helical backbone' metal receptor"/>
    <property type="match status" value="1"/>
</dbReference>
<dbReference type="PROSITE" id="PS50983">
    <property type="entry name" value="FE_B12_PBP"/>
    <property type="match status" value="1"/>
</dbReference>